<feature type="signal peptide" evidence="2">
    <location>
        <begin position="1"/>
        <end status="unknown"/>
    </location>
</feature>
<feature type="propeptide" id="PRO_0000407124" evidence="1">
    <location>
        <begin status="unknown"/>
        <end position="110"/>
    </location>
</feature>
<feature type="chain" id="PRO_0000407125" description="Neutral protease 2 homolog AFLA_119780">
    <location>
        <begin position="111"/>
        <end position="284"/>
    </location>
</feature>
<feature type="active site" evidence="3">
    <location>
        <position position="236"/>
    </location>
</feature>
<feature type="binding site" evidence="3">
    <location>
        <position position="235"/>
    </location>
    <ligand>
        <name>Zn(2+)</name>
        <dbReference type="ChEBI" id="CHEBI:29105"/>
        <note>catalytic</note>
    </ligand>
</feature>
<feature type="binding site" evidence="3">
    <location>
        <position position="239"/>
    </location>
    <ligand>
        <name>Zn(2+)</name>
        <dbReference type="ChEBI" id="CHEBI:29105"/>
        <note>catalytic</note>
    </ligand>
</feature>
<feature type="binding site" evidence="3">
    <location>
        <position position="250"/>
    </location>
    <ligand>
        <name>Zn(2+)</name>
        <dbReference type="ChEBI" id="CHEBI:29105"/>
        <note>catalytic</note>
    </ligand>
</feature>
<feature type="disulfide bond" evidence="1">
    <location>
        <begin position="113"/>
        <end position="185"/>
    </location>
</feature>
<feature type="disulfide bond" evidence="1">
    <location>
        <begin position="192"/>
        <end position="210"/>
    </location>
</feature>
<gene>
    <name type="ORF">AFLA_119780</name>
</gene>
<organism>
    <name type="scientific">Aspergillus flavus (strain ATCC 200026 / FGSC A1120 / IAM 13836 / NRRL 3357 / JCM 12722 / SRRC 167)</name>
    <dbReference type="NCBI Taxonomy" id="332952"/>
    <lineage>
        <taxon>Eukaryota</taxon>
        <taxon>Fungi</taxon>
        <taxon>Dikarya</taxon>
        <taxon>Ascomycota</taxon>
        <taxon>Pezizomycotina</taxon>
        <taxon>Eurotiomycetes</taxon>
        <taxon>Eurotiomycetidae</taxon>
        <taxon>Eurotiales</taxon>
        <taxon>Aspergillaceae</taxon>
        <taxon>Aspergillus</taxon>
        <taxon>Aspergillus subgen. Circumdati</taxon>
    </lineage>
</organism>
<sequence length="284" mass="30301">MAFINSAAEDEVQFEGIKRRLRSSGITKEAVTSLGAGETLEDEFDIASTSDLASGGPVSIRSHGFVPIVVDGKITGYIPYKSNDLTVNVDGGKAAKVTKALSQLTRRTEVTDCKGDAESSLTTALSNAAKLANQAAEAAESGDESKFEEYFKTTDQQTRTTVAERLRAVAKEAGSTSGGSTTYHCSDPYGYCEPNVLAYTLPSKNEIANCDIYYSELPPLAQKCHAQDQATTTLHEFTHAPGVYQPGTEDLGYGYDAATQLSAQDALNNADSYALYANAIELKC</sequence>
<keyword id="KW-0165">Cleavage on pair of basic residues</keyword>
<keyword id="KW-1015">Disulfide bond</keyword>
<keyword id="KW-0378">Hydrolase</keyword>
<keyword id="KW-0479">Metal-binding</keyword>
<keyword id="KW-0482">Metalloprotease</keyword>
<keyword id="KW-0645">Protease</keyword>
<keyword id="KW-0964">Secreted</keyword>
<keyword id="KW-0732">Signal</keyword>
<keyword id="KW-0862">Zinc</keyword>
<keyword id="KW-0865">Zymogen</keyword>
<reference key="1">
    <citation type="journal article" date="2015" name="Genome Announc.">
        <title>Genome sequence of Aspergillus flavus NRRL 3357, a strain that causes aflatoxin contamination of food and feed.</title>
        <authorList>
            <person name="Nierman W.C."/>
            <person name="Yu J."/>
            <person name="Fedorova-Abrams N.D."/>
            <person name="Losada L."/>
            <person name="Cleveland T.E."/>
            <person name="Bhatnagar D."/>
            <person name="Bennett J.W."/>
            <person name="Dean R."/>
            <person name="Payne G.A."/>
        </authorList>
    </citation>
    <scope>NUCLEOTIDE SEQUENCE [LARGE SCALE GENOMIC DNA]</scope>
    <source>
        <strain>ATCC 200026 / FGSC A1120 / IAM 13836 / NRRL 3357 / JCM 12722 / SRRC 167</strain>
    </source>
</reference>
<proteinExistence type="inferred from homology"/>
<dbReference type="EC" id="3.4.24.39"/>
<dbReference type="EMBL" id="EQ963485">
    <property type="protein sequence ID" value="EED45749.1"/>
    <property type="molecule type" value="Genomic_DNA"/>
</dbReference>
<dbReference type="RefSeq" id="XP_002384685.1">
    <property type="nucleotide sequence ID" value="XM_002384644.1"/>
</dbReference>
<dbReference type="SMR" id="B8NWE1"/>
<dbReference type="STRING" id="332952.B8NWE1"/>
<dbReference type="MEROPS" id="M35.001"/>
<dbReference type="EnsemblFungi" id="EED45749">
    <property type="protein sequence ID" value="EED45749"/>
    <property type="gene ID" value="AFLA_119780"/>
</dbReference>
<dbReference type="VEuPathDB" id="FungiDB:AFLA_013976"/>
<dbReference type="eggNOG" id="ENOG502SGF5">
    <property type="taxonomic scope" value="Eukaryota"/>
</dbReference>
<dbReference type="HOGENOM" id="CLU_039313_2_0_1"/>
<dbReference type="OMA" id="NEIANCD"/>
<dbReference type="GO" id="GO:0005576">
    <property type="term" value="C:extracellular region"/>
    <property type="evidence" value="ECO:0007669"/>
    <property type="project" value="UniProtKB-SubCell"/>
</dbReference>
<dbReference type="GO" id="GO:0046872">
    <property type="term" value="F:metal ion binding"/>
    <property type="evidence" value="ECO:0007669"/>
    <property type="project" value="UniProtKB-KW"/>
</dbReference>
<dbReference type="GO" id="GO:0004222">
    <property type="term" value="F:metalloendopeptidase activity"/>
    <property type="evidence" value="ECO:0007669"/>
    <property type="project" value="InterPro"/>
</dbReference>
<dbReference type="GO" id="GO:0006508">
    <property type="term" value="P:proteolysis"/>
    <property type="evidence" value="ECO:0007669"/>
    <property type="project" value="UniProtKB-KW"/>
</dbReference>
<dbReference type="CDD" id="cd11008">
    <property type="entry name" value="M35_deuterolysin_like"/>
    <property type="match status" value="1"/>
</dbReference>
<dbReference type="FunFam" id="3.40.390.10:FF:000082">
    <property type="entry name" value="Neutral protease 2"/>
    <property type="match status" value="1"/>
</dbReference>
<dbReference type="Gene3D" id="2.60.40.2970">
    <property type="match status" value="1"/>
</dbReference>
<dbReference type="Gene3D" id="3.40.390.10">
    <property type="entry name" value="Collagenase (Catalytic Domain)"/>
    <property type="match status" value="1"/>
</dbReference>
<dbReference type="InterPro" id="IPR050414">
    <property type="entry name" value="Fungal_M35_metalloproteases"/>
</dbReference>
<dbReference type="InterPro" id="IPR024079">
    <property type="entry name" value="MetalloPept_cat_dom_sf"/>
</dbReference>
<dbReference type="InterPro" id="IPR001384">
    <property type="entry name" value="Peptidase_M35"/>
</dbReference>
<dbReference type="PANTHER" id="PTHR37016">
    <property type="match status" value="1"/>
</dbReference>
<dbReference type="PANTHER" id="PTHR37016:SF3">
    <property type="entry name" value="NEUTRAL PROTEASE 2-RELATED"/>
    <property type="match status" value="1"/>
</dbReference>
<dbReference type="Pfam" id="PF02102">
    <property type="entry name" value="Peptidase_M35"/>
    <property type="match status" value="1"/>
</dbReference>
<dbReference type="PRINTS" id="PR00768">
    <property type="entry name" value="DEUTEROLYSIN"/>
</dbReference>
<dbReference type="SUPFAM" id="SSF55486">
    <property type="entry name" value="Metalloproteases ('zincins'), catalytic domain"/>
    <property type="match status" value="1"/>
</dbReference>
<dbReference type="PROSITE" id="PS00142">
    <property type="entry name" value="ZINC_PROTEASE"/>
    <property type="match status" value="1"/>
</dbReference>
<name>NPIIB_ASPFN</name>
<comment type="function">
    <text evidence="1">Secreted metalloproteinase that allows assimilation of proteinaceous substrates. Shows high activities on basic nuclear substrates such as histone and protamine (By similarity).</text>
</comment>
<comment type="catalytic activity">
    <reaction>
        <text>Preferential cleavage of bonds with hydrophobic residues in P1'. Also 3-Asn-|-Gln-4 and 8-Gly-|-Ser-9 bonds in insulin B chain.</text>
        <dbReference type="EC" id="3.4.24.39"/>
    </reaction>
</comment>
<comment type="cofactor">
    <cofactor evidence="1">
        <name>Zn(2+)</name>
        <dbReference type="ChEBI" id="CHEBI:29105"/>
    </cofactor>
    <text evidence="1">Binds 1 zinc ion per subunit.</text>
</comment>
<comment type="subcellular location">
    <subcellularLocation>
        <location evidence="1">Secreted</location>
    </subcellularLocation>
</comment>
<comment type="similarity">
    <text evidence="4">Belongs to the peptidase M35 family.</text>
</comment>
<accession>B8NWE1</accession>
<protein>
    <recommendedName>
        <fullName>Neutral protease 2 homolog AFLA_119780</fullName>
        <ecNumber>3.4.24.39</ecNumber>
    </recommendedName>
    <alternativeName>
        <fullName>Deuterolysin AFLA_119780</fullName>
    </alternativeName>
</protein>
<evidence type="ECO:0000250" key="1"/>
<evidence type="ECO:0000255" key="2"/>
<evidence type="ECO:0000255" key="3">
    <source>
        <dbReference type="PROSITE-ProRule" id="PRU10095"/>
    </source>
</evidence>
<evidence type="ECO:0000305" key="4"/>